<sequence>MKSFKETIINACLMGFFSFFSLSSVIFVKNITNNQIKNIKEKQKNTLIQQVIPRVMYHSFEKKYFLIKDKLLGDQKKHNLWLLFKNKQAKVAVVESIAPDGYSGSISILVAAYLNGKIIGVRVLSHKETPGIGDKIEISISNWITKFQDMNVIDLKDKKFLLKKYGGKIEQFTGATITPQSVSNAVKRTVVFIKKIPLIFSL</sequence>
<dbReference type="EC" id="7.-.-.-" evidence="1"/>
<dbReference type="EMBL" id="AE013218">
    <property type="protein sequence ID" value="AAM67678.1"/>
    <property type="molecule type" value="Genomic_DNA"/>
</dbReference>
<dbReference type="RefSeq" id="WP_011053644.1">
    <property type="nucleotide sequence ID" value="NC_004061.1"/>
</dbReference>
<dbReference type="SMR" id="Q8KA18"/>
<dbReference type="STRING" id="198804.BUsg_109"/>
<dbReference type="GeneID" id="93003579"/>
<dbReference type="KEGG" id="bas:BUsg_109"/>
<dbReference type="eggNOG" id="COG4659">
    <property type="taxonomic scope" value="Bacteria"/>
</dbReference>
<dbReference type="HOGENOM" id="CLU_077882_1_0_6"/>
<dbReference type="Proteomes" id="UP000000416">
    <property type="component" value="Chromosome"/>
</dbReference>
<dbReference type="GO" id="GO:0005886">
    <property type="term" value="C:plasma membrane"/>
    <property type="evidence" value="ECO:0007669"/>
    <property type="project" value="UniProtKB-SubCell"/>
</dbReference>
<dbReference type="GO" id="GO:0009055">
    <property type="term" value="F:electron transfer activity"/>
    <property type="evidence" value="ECO:0007669"/>
    <property type="project" value="InterPro"/>
</dbReference>
<dbReference type="GO" id="GO:0010181">
    <property type="term" value="F:FMN binding"/>
    <property type="evidence" value="ECO:0007669"/>
    <property type="project" value="InterPro"/>
</dbReference>
<dbReference type="GO" id="GO:0022900">
    <property type="term" value="P:electron transport chain"/>
    <property type="evidence" value="ECO:0007669"/>
    <property type="project" value="UniProtKB-UniRule"/>
</dbReference>
<dbReference type="HAMAP" id="MF_00479">
    <property type="entry name" value="RsxG_RnfG"/>
    <property type="match status" value="1"/>
</dbReference>
<dbReference type="InterPro" id="IPR007329">
    <property type="entry name" value="FMN-bd"/>
</dbReference>
<dbReference type="InterPro" id="IPR010209">
    <property type="entry name" value="Ion_transpt_RnfG/RsxG"/>
</dbReference>
<dbReference type="NCBIfam" id="NF002519">
    <property type="entry name" value="PRK01908.1"/>
    <property type="match status" value="1"/>
</dbReference>
<dbReference type="NCBIfam" id="TIGR01947">
    <property type="entry name" value="rnfG"/>
    <property type="match status" value="1"/>
</dbReference>
<dbReference type="PANTHER" id="PTHR36118">
    <property type="entry name" value="ION-TRANSLOCATING OXIDOREDUCTASE COMPLEX SUBUNIT G"/>
    <property type="match status" value="1"/>
</dbReference>
<dbReference type="PANTHER" id="PTHR36118:SF1">
    <property type="entry name" value="ION-TRANSLOCATING OXIDOREDUCTASE COMPLEX SUBUNIT G"/>
    <property type="match status" value="1"/>
</dbReference>
<dbReference type="Pfam" id="PF04205">
    <property type="entry name" value="FMN_bind"/>
    <property type="match status" value="1"/>
</dbReference>
<dbReference type="PIRSF" id="PIRSF006091">
    <property type="entry name" value="E_trnsport_RnfG"/>
    <property type="match status" value="1"/>
</dbReference>
<dbReference type="SMART" id="SM00900">
    <property type="entry name" value="FMN_bind"/>
    <property type="match status" value="1"/>
</dbReference>
<evidence type="ECO:0000255" key="1">
    <source>
        <dbReference type="HAMAP-Rule" id="MF_00479"/>
    </source>
</evidence>
<evidence type="ECO:0000305" key="2"/>
<name>RNFG_BUCAP</name>
<accession>Q8KA18</accession>
<reference key="1">
    <citation type="journal article" date="2002" name="Science">
        <title>50 million years of genomic stasis in endosymbiotic bacteria.</title>
        <authorList>
            <person name="Tamas I."/>
            <person name="Klasson L."/>
            <person name="Canbaeck B."/>
            <person name="Naeslund A.K."/>
            <person name="Eriksson A.-S."/>
            <person name="Wernegreen J.J."/>
            <person name="Sandstroem J.P."/>
            <person name="Moran N.A."/>
            <person name="Andersson S.G.E."/>
        </authorList>
    </citation>
    <scope>NUCLEOTIDE SEQUENCE [LARGE SCALE GENOMIC DNA]</scope>
    <source>
        <strain>Sg</strain>
    </source>
</reference>
<proteinExistence type="inferred from homology"/>
<keyword id="KW-0997">Cell inner membrane</keyword>
<keyword id="KW-1003">Cell membrane</keyword>
<keyword id="KW-0249">Electron transport</keyword>
<keyword id="KW-0285">Flavoprotein</keyword>
<keyword id="KW-0288">FMN</keyword>
<keyword id="KW-0472">Membrane</keyword>
<keyword id="KW-0597">Phosphoprotein</keyword>
<keyword id="KW-1278">Translocase</keyword>
<keyword id="KW-0812">Transmembrane</keyword>
<keyword id="KW-1133">Transmembrane helix</keyword>
<keyword id="KW-0813">Transport</keyword>
<gene>
    <name evidence="1" type="primary">rnfG</name>
    <name type="ordered locus">BUsg_109</name>
</gene>
<feature type="chain" id="PRO_0000214631" description="Ion-translocating oxidoreductase complex subunit G">
    <location>
        <begin position="1"/>
        <end position="202"/>
    </location>
</feature>
<feature type="transmembrane region" description="Helical" evidence="1">
    <location>
        <begin position="11"/>
        <end position="31"/>
    </location>
</feature>
<feature type="modified residue" description="FMN phosphoryl threonine" evidence="1">
    <location>
        <position position="176"/>
    </location>
</feature>
<organism>
    <name type="scientific">Buchnera aphidicola subsp. Schizaphis graminum (strain Sg)</name>
    <dbReference type="NCBI Taxonomy" id="198804"/>
    <lineage>
        <taxon>Bacteria</taxon>
        <taxon>Pseudomonadati</taxon>
        <taxon>Pseudomonadota</taxon>
        <taxon>Gammaproteobacteria</taxon>
        <taxon>Enterobacterales</taxon>
        <taxon>Erwiniaceae</taxon>
        <taxon>Buchnera</taxon>
    </lineage>
</organism>
<comment type="function">
    <text evidence="1">Part of a membrane-bound complex that couples electron transfer with translocation of ions across the membrane.</text>
</comment>
<comment type="cofactor">
    <cofactor evidence="1">
        <name>FMN</name>
        <dbReference type="ChEBI" id="CHEBI:58210"/>
    </cofactor>
</comment>
<comment type="subunit">
    <text evidence="1">The complex is composed of six subunits: RnfA, RnfB, RnfC, RnfD, RnfE and RnfG.</text>
</comment>
<comment type="subcellular location">
    <subcellularLocation>
        <location evidence="1 2">Cell inner membrane</location>
        <topology evidence="1">Single-pass membrane protein</topology>
    </subcellularLocation>
</comment>
<comment type="similarity">
    <text evidence="1 2">Belongs to the RnfG family.</text>
</comment>
<protein>
    <recommendedName>
        <fullName evidence="1">Ion-translocating oxidoreductase complex subunit G</fullName>
        <ecNumber evidence="1">7.-.-.-</ecNumber>
    </recommendedName>
    <alternativeName>
        <fullName evidence="1">Rnf electron transport complex subunit G</fullName>
    </alternativeName>
</protein>